<gene>
    <name type="ORF">Bm1_54325</name>
</gene>
<organism>
    <name type="scientific">Brugia malayi</name>
    <name type="common">Filarial nematode worm</name>
    <dbReference type="NCBI Taxonomy" id="6279"/>
    <lineage>
        <taxon>Eukaryota</taxon>
        <taxon>Metazoa</taxon>
        <taxon>Ecdysozoa</taxon>
        <taxon>Nematoda</taxon>
        <taxon>Chromadorea</taxon>
        <taxon>Rhabditida</taxon>
        <taxon>Spirurina</taxon>
        <taxon>Spiruromorpha</taxon>
        <taxon>Filarioidea</taxon>
        <taxon>Onchocercidae</taxon>
        <taxon>Brugia</taxon>
    </lineage>
</organism>
<accession>A8QFY9</accession>
<comment type="function">
    <text evidence="1">Substrate adapter for ufmylation, the covalent attachment of the ubiquitin-like modifier UFM1 to substrate proteins.</text>
</comment>
<comment type="subcellular location">
    <subcellularLocation>
        <location evidence="1">Endoplasmic reticulum membrane</location>
        <topology evidence="1">Single-pass membrane protein</topology>
    </subcellularLocation>
</comment>
<comment type="similarity">
    <text evidence="4">Belongs to the DDRGK1 family.</text>
</comment>
<protein>
    <recommendedName>
        <fullName>DDRGK domain-containing protein 1</fullName>
    </recommendedName>
</protein>
<evidence type="ECO:0000250" key="1">
    <source>
        <dbReference type="UniProtKB" id="Q96HY6"/>
    </source>
</evidence>
<evidence type="ECO:0000255" key="2"/>
<evidence type="ECO:0000256" key="3">
    <source>
        <dbReference type="SAM" id="MobiDB-lite"/>
    </source>
</evidence>
<evidence type="ECO:0000305" key="4"/>
<name>DDRGK_BRUMA</name>
<reference key="1">
    <citation type="journal article" date="2007" name="Science">
        <title>Draft genome of the filarial nematode parasite Brugia malayi.</title>
        <authorList>
            <person name="Ghedin E."/>
            <person name="Wang S."/>
            <person name="Spiro D."/>
            <person name="Caler E."/>
            <person name="Zhao Q."/>
            <person name="Crabtree J."/>
            <person name="Allen J.E."/>
            <person name="Delcher A.L."/>
            <person name="Guiliano D.B."/>
            <person name="Miranda-Saavedra D."/>
            <person name="Angiuoli S.V."/>
            <person name="Creasy T."/>
            <person name="Amedeo P."/>
            <person name="Haas B."/>
            <person name="El-Sayed N.M."/>
            <person name="Wortman J.R."/>
            <person name="Feldblyum T."/>
            <person name="Tallon L."/>
            <person name="Schatz M."/>
            <person name="Shumway M."/>
            <person name="Koo H."/>
            <person name="Salzberg S.L."/>
            <person name="Schobel S."/>
            <person name="Pertea M."/>
            <person name="Pop M."/>
            <person name="White O."/>
            <person name="Barton G.J."/>
            <person name="Carlow C.K.S."/>
            <person name="Crawford M.J."/>
            <person name="Daub J."/>
            <person name="Dimmic M.W."/>
            <person name="Estes C.F."/>
            <person name="Foster J.M."/>
            <person name="Ganatra M."/>
            <person name="Gregory W.F."/>
            <person name="Johnson N.M."/>
            <person name="Jin J."/>
            <person name="Komuniecki R."/>
            <person name="Korf I."/>
            <person name="Kumar S."/>
            <person name="Laney S."/>
            <person name="Li B.-W."/>
            <person name="Li W."/>
            <person name="Lindblom T.H."/>
            <person name="Lustigman S."/>
            <person name="Ma D."/>
            <person name="Maina C.V."/>
            <person name="Martin D.M."/>
            <person name="McCarter J.P."/>
            <person name="McReynolds L."/>
            <person name="Mitreva M."/>
            <person name="Nutman T.B."/>
            <person name="Parkinson J."/>
            <person name="Peregrin-Alvarez J.M."/>
            <person name="Poole C."/>
            <person name="Ren Q."/>
            <person name="Saunders L."/>
            <person name="Sluder A.E."/>
            <person name="Smith K."/>
            <person name="Stanke M."/>
            <person name="Unnasch T.R."/>
            <person name="Ware J."/>
            <person name="Wei A.D."/>
            <person name="Weil G."/>
            <person name="Williams D.J."/>
            <person name="Zhang Y."/>
            <person name="Williams S.A."/>
            <person name="Fraser-Liggett C."/>
            <person name="Slatko B."/>
            <person name="Blaxter M.L."/>
            <person name="Scott A.L."/>
        </authorList>
    </citation>
    <scope>NUCLEOTIDE SEQUENCE [LARGE SCALE GENOMIC DNA]</scope>
</reference>
<feature type="chain" id="PRO_0000391868" description="DDRGK domain-containing protein 1">
    <location>
        <begin position="1"/>
        <end position="316"/>
    </location>
</feature>
<feature type="topological domain" description="Lumenal" evidence="4">
    <location>
        <begin position="1"/>
        <end position="3"/>
    </location>
</feature>
<feature type="transmembrane region" description="Helical" evidence="2">
    <location>
        <begin position="4"/>
        <end position="24"/>
    </location>
</feature>
<feature type="topological domain" description="Cytoplasmic" evidence="4">
    <location>
        <begin position="25"/>
        <end position="316"/>
    </location>
</feature>
<feature type="region of interest" description="Disordered" evidence="3">
    <location>
        <begin position="147"/>
        <end position="187"/>
    </location>
</feature>
<sequence length="316" mass="37009">MVELDYLFLGSVGFLTIALMLIILRIIKLYFDEKQARKRKEALSAMAADEHAARNERDVVVVGGRRVQTARRRVRHNVDDGNNDDMGFVRNAIDQNGDISEQEDLPSADLARDEHFGKKKLAKLQAKEERRKQREAELLEREERKKLEQEKEKRLQKEREKQMEQEEEERKRKCREREEREKREEEEYKKLRETFAVDEEGFDQTDGEESQNLLRDFVEYVRKTKVVNIDELGAHFNLRTEDAVDRLNFLVGNGTLTGIMDDRGKFIHITSEELQAVAKFINQRGRVSKAELIEYSNKLIALESRCVEHVSELTAA</sequence>
<keyword id="KW-0256">Endoplasmic reticulum</keyword>
<keyword id="KW-0472">Membrane</keyword>
<keyword id="KW-1185">Reference proteome</keyword>
<keyword id="KW-0812">Transmembrane</keyword>
<keyword id="KW-1133">Transmembrane helix</keyword>
<keyword id="KW-0833">Ubl conjugation pathway</keyword>
<proteinExistence type="inferred from homology"/>
<dbReference type="EMBL" id="DS239583">
    <property type="protein sequence ID" value="EDP28831.1"/>
    <property type="molecule type" value="Genomic_DNA"/>
</dbReference>
<dbReference type="SMR" id="A8QFY9"/>
<dbReference type="FunCoup" id="A8QFY9">
    <property type="interactions" value="1156"/>
</dbReference>
<dbReference type="STRING" id="6279.A8QFY9"/>
<dbReference type="EnsemblMetazoa" id="Bm7643a.1">
    <property type="protein sequence ID" value="Bm7643a.1"/>
    <property type="gene ID" value="WBGene00227904"/>
</dbReference>
<dbReference type="GeneID" id="6105744"/>
<dbReference type="KEGG" id="bmy:BM_BM7643"/>
<dbReference type="CTD" id="6105744"/>
<dbReference type="WormBase" id="Bm7643a">
    <property type="protein sequence ID" value="BM06413"/>
    <property type="gene ID" value="WBGene00227904"/>
    <property type="gene designation" value="Bma-ufbp-1"/>
</dbReference>
<dbReference type="HOGENOM" id="CLU_059562_1_0_1"/>
<dbReference type="InParanoid" id="A8QFY9"/>
<dbReference type="OrthoDB" id="2285710at2759"/>
<dbReference type="Proteomes" id="UP000006672">
    <property type="component" value="Unassembled WGS sequence"/>
</dbReference>
<dbReference type="GO" id="GO:0005789">
    <property type="term" value="C:endoplasmic reticulum membrane"/>
    <property type="evidence" value="ECO:0007669"/>
    <property type="project" value="UniProtKB-SubCell"/>
</dbReference>
<dbReference type="GO" id="GO:0044389">
    <property type="term" value="F:ubiquitin-like protein ligase binding"/>
    <property type="evidence" value="ECO:0007669"/>
    <property type="project" value="TreeGrafter"/>
</dbReference>
<dbReference type="FunFam" id="1.10.10.10:FF:000143">
    <property type="entry name" value="DDRGK domain-containing protein 1"/>
    <property type="match status" value="1"/>
</dbReference>
<dbReference type="Gene3D" id="1.10.10.10">
    <property type="entry name" value="Winged helix-like DNA-binding domain superfamily/Winged helix DNA-binding domain"/>
    <property type="match status" value="1"/>
</dbReference>
<dbReference type="InterPro" id="IPR019153">
    <property type="entry name" value="DDRGK_dom-contain"/>
</dbReference>
<dbReference type="InterPro" id="IPR050899">
    <property type="entry name" value="DDRGK_domain-containing"/>
</dbReference>
<dbReference type="InterPro" id="IPR036388">
    <property type="entry name" value="WH-like_DNA-bd_sf"/>
</dbReference>
<dbReference type="InterPro" id="IPR036390">
    <property type="entry name" value="WH_DNA-bd_sf"/>
</dbReference>
<dbReference type="PANTHER" id="PTHR48176">
    <property type="entry name" value="DDRGK DOMAIN-CONTAINING PROTEIN 1"/>
    <property type="match status" value="1"/>
</dbReference>
<dbReference type="PANTHER" id="PTHR48176:SF1">
    <property type="entry name" value="DDRGK DOMAIN-CONTAINING PROTEIN 1"/>
    <property type="match status" value="1"/>
</dbReference>
<dbReference type="Pfam" id="PF09756">
    <property type="entry name" value="DDRGK"/>
    <property type="match status" value="1"/>
</dbReference>
<dbReference type="SMART" id="SM01128">
    <property type="entry name" value="DDRGK"/>
    <property type="match status" value="1"/>
</dbReference>
<dbReference type="SUPFAM" id="SSF46785">
    <property type="entry name" value="Winged helix' DNA-binding domain"/>
    <property type="match status" value="1"/>
</dbReference>